<gene>
    <name evidence="1" type="primary">atpA</name>
    <name type="ordered locus">Sbal195_4509</name>
</gene>
<reference key="1">
    <citation type="submission" date="2007-11" db="EMBL/GenBank/DDBJ databases">
        <title>Complete sequence of chromosome of Shewanella baltica OS195.</title>
        <authorList>
            <consortium name="US DOE Joint Genome Institute"/>
            <person name="Copeland A."/>
            <person name="Lucas S."/>
            <person name="Lapidus A."/>
            <person name="Barry K."/>
            <person name="Glavina del Rio T."/>
            <person name="Dalin E."/>
            <person name="Tice H."/>
            <person name="Pitluck S."/>
            <person name="Chain P."/>
            <person name="Malfatti S."/>
            <person name="Shin M."/>
            <person name="Vergez L."/>
            <person name="Schmutz J."/>
            <person name="Larimer F."/>
            <person name="Land M."/>
            <person name="Hauser L."/>
            <person name="Kyrpides N."/>
            <person name="Kim E."/>
            <person name="Brettar I."/>
            <person name="Rodrigues J."/>
            <person name="Konstantinidis K."/>
            <person name="Klappenbach J."/>
            <person name="Hofle M."/>
            <person name="Tiedje J."/>
            <person name="Richardson P."/>
        </authorList>
    </citation>
    <scope>NUCLEOTIDE SEQUENCE [LARGE SCALE GENOMIC DNA]</scope>
    <source>
        <strain>OS195</strain>
    </source>
</reference>
<accession>A9KX08</accession>
<keyword id="KW-0066">ATP synthesis</keyword>
<keyword id="KW-0067">ATP-binding</keyword>
<keyword id="KW-0997">Cell inner membrane</keyword>
<keyword id="KW-1003">Cell membrane</keyword>
<keyword id="KW-0139">CF(1)</keyword>
<keyword id="KW-0375">Hydrogen ion transport</keyword>
<keyword id="KW-0406">Ion transport</keyword>
<keyword id="KW-0472">Membrane</keyword>
<keyword id="KW-0547">Nucleotide-binding</keyword>
<keyword id="KW-1278">Translocase</keyword>
<keyword id="KW-0813">Transport</keyword>
<organism>
    <name type="scientific">Shewanella baltica (strain OS195)</name>
    <dbReference type="NCBI Taxonomy" id="399599"/>
    <lineage>
        <taxon>Bacteria</taxon>
        <taxon>Pseudomonadati</taxon>
        <taxon>Pseudomonadota</taxon>
        <taxon>Gammaproteobacteria</taxon>
        <taxon>Alteromonadales</taxon>
        <taxon>Shewanellaceae</taxon>
        <taxon>Shewanella</taxon>
    </lineage>
</organism>
<evidence type="ECO:0000255" key="1">
    <source>
        <dbReference type="HAMAP-Rule" id="MF_01346"/>
    </source>
</evidence>
<protein>
    <recommendedName>
        <fullName evidence="1">ATP synthase subunit alpha</fullName>
        <ecNumber evidence="1">7.1.2.2</ecNumber>
    </recommendedName>
    <alternativeName>
        <fullName evidence="1">ATP synthase F1 sector subunit alpha</fullName>
    </alternativeName>
    <alternativeName>
        <fullName evidence="1">F-ATPase subunit alpha</fullName>
    </alternativeName>
</protein>
<comment type="function">
    <text evidence="1">Produces ATP from ADP in the presence of a proton gradient across the membrane. The alpha chain is a regulatory subunit.</text>
</comment>
<comment type="catalytic activity">
    <reaction evidence="1">
        <text>ATP + H2O + 4 H(+)(in) = ADP + phosphate + 5 H(+)(out)</text>
        <dbReference type="Rhea" id="RHEA:57720"/>
        <dbReference type="ChEBI" id="CHEBI:15377"/>
        <dbReference type="ChEBI" id="CHEBI:15378"/>
        <dbReference type="ChEBI" id="CHEBI:30616"/>
        <dbReference type="ChEBI" id="CHEBI:43474"/>
        <dbReference type="ChEBI" id="CHEBI:456216"/>
        <dbReference type="EC" id="7.1.2.2"/>
    </reaction>
</comment>
<comment type="subunit">
    <text evidence="1">F-type ATPases have 2 components, CF(1) - the catalytic core - and CF(0) - the membrane proton channel. CF(1) has five subunits: alpha(3), beta(3), gamma(1), delta(1), epsilon(1). CF(0) has three main subunits: a(1), b(2) and c(9-12). The alpha and beta chains form an alternating ring which encloses part of the gamma chain. CF(1) is attached to CF(0) by a central stalk formed by the gamma and epsilon chains, while a peripheral stalk is formed by the delta and b chains.</text>
</comment>
<comment type="subcellular location">
    <subcellularLocation>
        <location evidence="1">Cell inner membrane</location>
        <topology evidence="1">Peripheral membrane protein</topology>
    </subcellularLocation>
</comment>
<comment type="similarity">
    <text evidence="1">Belongs to the ATPase alpha/beta chains family.</text>
</comment>
<name>ATPA_SHEB9</name>
<proteinExistence type="inferred from homology"/>
<dbReference type="EC" id="7.1.2.2" evidence="1"/>
<dbReference type="EMBL" id="CP000891">
    <property type="protein sequence ID" value="ABX51666.1"/>
    <property type="molecule type" value="Genomic_DNA"/>
</dbReference>
<dbReference type="RefSeq" id="WP_006083843.1">
    <property type="nucleotide sequence ID" value="NC_009997.1"/>
</dbReference>
<dbReference type="SMR" id="A9KX08"/>
<dbReference type="GeneID" id="11774462"/>
<dbReference type="KEGG" id="sbn:Sbal195_4509"/>
<dbReference type="HOGENOM" id="CLU_010091_2_1_6"/>
<dbReference type="Proteomes" id="UP000000770">
    <property type="component" value="Chromosome"/>
</dbReference>
<dbReference type="GO" id="GO:0005886">
    <property type="term" value="C:plasma membrane"/>
    <property type="evidence" value="ECO:0007669"/>
    <property type="project" value="UniProtKB-SubCell"/>
</dbReference>
<dbReference type="GO" id="GO:0045259">
    <property type="term" value="C:proton-transporting ATP synthase complex"/>
    <property type="evidence" value="ECO:0007669"/>
    <property type="project" value="UniProtKB-KW"/>
</dbReference>
<dbReference type="GO" id="GO:0043531">
    <property type="term" value="F:ADP binding"/>
    <property type="evidence" value="ECO:0007669"/>
    <property type="project" value="TreeGrafter"/>
</dbReference>
<dbReference type="GO" id="GO:0005524">
    <property type="term" value="F:ATP binding"/>
    <property type="evidence" value="ECO:0007669"/>
    <property type="project" value="UniProtKB-UniRule"/>
</dbReference>
<dbReference type="GO" id="GO:0046933">
    <property type="term" value="F:proton-transporting ATP synthase activity, rotational mechanism"/>
    <property type="evidence" value="ECO:0007669"/>
    <property type="project" value="UniProtKB-UniRule"/>
</dbReference>
<dbReference type="CDD" id="cd18113">
    <property type="entry name" value="ATP-synt_F1_alpha_C"/>
    <property type="match status" value="1"/>
</dbReference>
<dbReference type="CDD" id="cd18116">
    <property type="entry name" value="ATP-synt_F1_alpha_N"/>
    <property type="match status" value="1"/>
</dbReference>
<dbReference type="CDD" id="cd01132">
    <property type="entry name" value="F1-ATPase_alpha_CD"/>
    <property type="match status" value="1"/>
</dbReference>
<dbReference type="FunFam" id="1.20.150.20:FF:000001">
    <property type="entry name" value="ATP synthase subunit alpha"/>
    <property type="match status" value="1"/>
</dbReference>
<dbReference type="FunFam" id="2.40.30.20:FF:000001">
    <property type="entry name" value="ATP synthase subunit alpha"/>
    <property type="match status" value="1"/>
</dbReference>
<dbReference type="FunFam" id="3.40.50.300:FF:000002">
    <property type="entry name" value="ATP synthase subunit alpha"/>
    <property type="match status" value="1"/>
</dbReference>
<dbReference type="Gene3D" id="2.40.30.20">
    <property type="match status" value="1"/>
</dbReference>
<dbReference type="Gene3D" id="1.20.150.20">
    <property type="entry name" value="ATP synthase alpha/beta chain, C-terminal domain"/>
    <property type="match status" value="1"/>
</dbReference>
<dbReference type="Gene3D" id="3.40.50.300">
    <property type="entry name" value="P-loop containing nucleotide triphosphate hydrolases"/>
    <property type="match status" value="1"/>
</dbReference>
<dbReference type="HAMAP" id="MF_01346">
    <property type="entry name" value="ATP_synth_alpha_bact"/>
    <property type="match status" value="1"/>
</dbReference>
<dbReference type="InterPro" id="IPR023366">
    <property type="entry name" value="ATP_synth_asu-like_sf"/>
</dbReference>
<dbReference type="InterPro" id="IPR000793">
    <property type="entry name" value="ATP_synth_asu_C"/>
</dbReference>
<dbReference type="InterPro" id="IPR038376">
    <property type="entry name" value="ATP_synth_asu_C_sf"/>
</dbReference>
<dbReference type="InterPro" id="IPR033732">
    <property type="entry name" value="ATP_synth_F1_a_nt-bd_dom"/>
</dbReference>
<dbReference type="InterPro" id="IPR005294">
    <property type="entry name" value="ATP_synth_F1_asu"/>
</dbReference>
<dbReference type="InterPro" id="IPR020003">
    <property type="entry name" value="ATPase_a/bsu_AS"/>
</dbReference>
<dbReference type="InterPro" id="IPR004100">
    <property type="entry name" value="ATPase_F1/V1/A1_a/bsu_N"/>
</dbReference>
<dbReference type="InterPro" id="IPR036121">
    <property type="entry name" value="ATPase_F1/V1/A1_a/bsu_N_sf"/>
</dbReference>
<dbReference type="InterPro" id="IPR000194">
    <property type="entry name" value="ATPase_F1/V1/A1_a/bsu_nucl-bd"/>
</dbReference>
<dbReference type="InterPro" id="IPR027417">
    <property type="entry name" value="P-loop_NTPase"/>
</dbReference>
<dbReference type="NCBIfam" id="TIGR00962">
    <property type="entry name" value="atpA"/>
    <property type="match status" value="1"/>
</dbReference>
<dbReference type="NCBIfam" id="NF009884">
    <property type="entry name" value="PRK13343.1"/>
    <property type="match status" value="1"/>
</dbReference>
<dbReference type="PANTHER" id="PTHR48082">
    <property type="entry name" value="ATP SYNTHASE SUBUNIT ALPHA, MITOCHONDRIAL"/>
    <property type="match status" value="1"/>
</dbReference>
<dbReference type="PANTHER" id="PTHR48082:SF2">
    <property type="entry name" value="ATP SYNTHASE SUBUNIT ALPHA, MITOCHONDRIAL"/>
    <property type="match status" value="1"/>
</dbReference>
<dbReference type="Pfam" id="PF00006">
    <property type="entry name" value="ATP-synt_ab"/>
    <property type="match status" value="1"/>
</dbReference>
<dbReference type="Pfam" id="PF00306">
    <property type="entry name" value="ATP-synt_ab_C"/>
    <property type="match status" value="1"/>
</dbReference>
<dbReference type="Pfam" id="PF02874">
    <property type="entry name" value="ATP-synt_ab_N"/>
    <property type="match status" value="1"/>
</dbReference>
<dbReference type="SUPFAM" id="SSF47917">
    <property type="entry name" value="C-terminal domain of alpha and beta subunits of F1 ATP synthase"/>
    <property type="match status" value="1"/>
</dbReference>
<dbReference type="SUPFAM" id="SSF50615">
    <property type="entry name" value="N-terminal domain of alpha and beta subunits of F1 ATP synthase"/>
    <property type="match status" value="1"/>
</dbReference>
<dbReference type="SUPFAM" id="SSF52540">
    <property type="entry name" value="P-loop containing nucleoside triphosphate hydrolases"/>
    <property type="match status" value="1"/>
</dbReference>
<dbReference type="PROSITE" id="PS00152">
    <property type="entry name" value="ATPASE_ALPHA_BETA"/>
    <property type="match status" value="1"/>
</dbReference>
<sequence>MQLNSTEISDLIKQRIEQFEVVSESRNEGTIVAVSDGIIRIHGLADVMQGEMIELPGNRFAIALNLERDSVGAVVMGPYADLAEGVKVKTTGRILEVPVGRGLLGRVVNTLGEPIDGKGPIDNDGYSPIEVIAPGVIERQSVDQPVQTGYKAVDAMIPIGRGQRELIIGDRQTGKTAMAIDAIINQKNSGIKCVYVAIGQKASTIANVVRKLEEHGALANTIVVVATASEAAALQYLAPYSGCSMGEYFRDRGEDSLIVYDDLSKQAVAYRQISLLLKRPPGREAYPGDVFYLHSRLLERASRVNAIYVEKFTKGAVTGKTGSLTALPIIETQAGDVSAFVPTNVISITDGQIFLETDLFNSGLRPAVNPGISVSRVGGAAQTKIIKKLSGGIRTALAQYRELAAFSQFASDLDDATRAQLEHGVRVTELMKQKQYAPMSVAAQAVSIFSAEKGYLKSVELNKVGNFEAALLSFMNSEHAPLMKLINDTGDYSADIEAELKAGLDKFVATQTW</sequence>
<feature type="chain" id="PRO_1000086894" description="ATP synthase subunit alpha">
    <location>
        <begin position="1"/>
        <end position="513"/>
    </location>
</feature>
<feature type="binding site" evidence="1">
    <location>
        <begin position="169"/>
        <end position="176"/>
    </location>
    <ligand>
        <name>ATP</name>
        <dbReference type="ChEBI" id="CHEBI:30616"/>
    </ligand>
</feature>
<feature type="site" description="Required for activity" evidence="1">
    <location>
        <position position="373"/>
    </location>
</feature>